<proteinExistence type="evidence at transcript level"/>
<comment type="sequence caution" evidence="1">
    <conflict type="erroneous gene model prediction">
        <sequence resource="EMBL-CDS" id="AAD22307"/>
    </conflict>
</comment>
<comment type="sequence caution" evidence="1">
    <conflict type="frameshift">
        <sequence resource="EMBL" id="AY500327"/>
    </conflict>
</comment>
<dbReference type="EMBL" id="AC007047">
    <property type="protein sequence ID" value="AAD22307.1"/>
    <property type="status" value="ALT_SEQ"/>
    <property type="molecule type" value="Genomic_DNA"/>
</dbReference>
<dbReference type="EMBL" id="CP002685">
    <property type="protein sequence ID" value="AEC06482.1"/>
    <property type="molecule type" value="Genomic_DNA"/>
</dbReference>
<dbReference type="EMBL" id="AY500327">
    <property type="status" value="NOT_ANNOTATED_CDS"/>
    <property type="molecule type" value="mRNA"/>
</dbReference>
<dbReference type="PIR" id="H84538">
    <property type="entry name" value="H84538"/>
</dbReference>
<dbReference type="RefSeq" id="NP_179225.2">
    <property type="nucleotide sequence ID" value="NM_127186.3"/>
</dbReference>
<dbReference type="FunCoup" id="Q9SIW9">
    <property type="interactions" value="34"/>
</dbReference>
<dbReference type="STRING" id="3702.Q9SIW9"/>
<dbReference type="PaxDb" id="3702-AT2G16300.1"/>
<dbReference type="EnsemblPlants" id="AT2G16300.1">
    <property type="protein sequence ID" value="AT2G16300.1"/>
    <property type="gene ID" value="AT2G16300"/>
</dbReference>
<dbReference type="GeneID" id="816126"/>
<dbReference type="Gramene" id="AT2G16300.1">
    <property type="protein sequence ID" value="AT2G16300.1"/>
    <property type="gene ID" value="AT2G16300"/>
</dbReference>
<dbReference type="KEGG" id="ath:AT2G16300"/>
<dbReference type="Araport" id="AT2G16300"/>
<dbReference type="TAIR" id="AT2G16300">
    <property type="gene designation" value="ATFDA9"/>
</dbReference>
<dbReference type="HOGENOM" id="CLU_019286_1_0_1"/>
<dbReference type="InParanoid" id="Q9SIW9"/>
<dbReference type="OMA" id="REFEEPM"/>
<dbReference type="PhylomeDB" id="Q9SIW9"/>
<dbReference type="PRO" id="PR:Q9SIW9"/>
<dbReference type="Proteomes" id="UP000006548">
    <property type="component" value="Chromosome 2"/>
</dbReference>
<dbReference type="Gene3D" id="1.20.1280.50">
    <property type="match status" value="1"/>
</dbReference>
<dbReference type="InterPro" id="IPR036047">
    <property type="entry name" value="F-box-like_dom_sf"/>
</dbReference>
<dbReference type="InterPro" id="IPR001810">
    <property type="entry name" value="F-box_dom"/>
</dbReference>
<dbReference type="InterPro" id="IPR005174">
    <property type="entry name" value="KIB1-4_b-propeller"/>
</dbReference>
<dbReference type="InterPro" id="IPR051304">
    <property type="entry name" value="SCF_F-box_domain"/>
</dbReference>
<dbReference type="PANTHER" id="PTHR47123:SF8">
    <property type="entry name" value="DUF295 DOMAIN-CONTAINING PROTEIN"/>
    <property type="match status" value="1"/>
</dbReference>
<dbReference type="PANTHER" id="PTHR47123">
    <property type="entry name" value="F-BOX PROTEIN SKIP23"/>
    <property type="match status" value="1"/>
</dbReference>
<dbReference type="Pfam" id="PF03478">
    <property type="entry name" value="Beta-prop_KIB1-4"/>
    <property type="match status" value="1"/>
</dbReference>
<dbReference type="Pfam" id="PF00646">
    <property type="entry name" value="F-box"/>
    <property type="match status" value="1"/>
</dbReference>
<dbReference type="SUPFAM" id="SSF81383">
    <property type="entry name" value="F-box domain"/>
    <property type="match status" value="1"/>
</dbReference>
<accession>Q9SIW9</accession>
<reference key="1">
    <citation type="journal article" date="1999" name="Nature">
        <title>Sequence and analysis of chromosome 2 of the plant Arabidopsis thaliana.</title>
        <authorList>
            <person name="Lin X."/>
            <person name="Kaul S."/>
            <person name="Rounsley S.D."/>
            <person name="Shea T.P."/>
            <person name="Benito M.-I."/>
            <person name="Town C.D."/>
            <person name="Fujii C.Y."/>
            <person name="Mason T.M."/>
            <person name="Bowman C.L."/>
            <person name="Barnstead M.E."/>
            <person name="Feldblyum T.V."/>
            <person name="Buell C.R."/>
            <person name="Ketchum K.A."/>
            <person name="Lee J.J."/>
            <person name="Ronning C.M."/>
            <person name="Koo H.L."/>
            <person name="Moffat K.S."/>
            <person name="Cronin L.A."/>
            <person name="Shen M."/>
            <person name="Pai G."/>
            <person name="Van Aken S."/>
            <person name="Umayam L."/>
            <person name="Tallon L.J."/>
            <person name="Gill J.E."/>
            <person name="Adams M.D."/>
            <person name="Carrera A.J."/>
            <person name="Creasy T.H."/>
            <person name="Goodman H.M."/>
            <person name="Somerville C.R."/>
            <person name="Copenhaver G.P."/>
            <person name="Preuss D."/>
            <person name="Nierman W.C."/>
            <person name="White O."/>
            <person name="Eisen J.A."/>
            <person name="Salzberg S.L."/>
            <person name="Fraser C.M."/>
            <person name="Venter J.C."/>
        </authorList>
    </citation>
    <scope>NUCLEOTIDE SEQUENCE [LARGE SCALE GENOMIC DNA]</scope>
    <source>
        <strain>cv. Columbia</strain>
    </source>
</reference>
<reference key="2">
    <citation type="journal article" date="2017" name="Plant J.">
        <title>Araport11: a complete reannotation of the Arabidopsis thaliana reference genome.</title>
        <authorList>
            <person name="Cheng C.Y."/>
            <person name="Krishnakumar V."/>
            <person name="Chan A.P."/>
            <person name="Thibaud-Nissen F."/>
            <person name="Schobel S."/>
            <person name="Town C.D."/>
        </authorList>
    </citation>
    <scope>GENOME REANNOTATION</scope>
    <source>
        <strain>cv. Columbia</strain>
    </source>
</reference>
<reference key="3">
    <citation type="journal article" date="2002" name="Plant Physiol.">
        <title>Cloning and sequencing of cDNAs for hypothetical genes from chromosome 2 of Arabidopsis.</title>
        <authorList>
            <person name="Xiao Y.-L."/>
            <person name="Malik M."/>
            <person name="Whitelaw C.A."/>
            <person name="Town C.D."/>
        </authorList>
    </citation>
    <scope>NUCLEOTIDE SEQUENCE [LARGE SCALE MRNA] OF 100-322</scope>
    <source>
        <strain>cv. Columbia</strain>
    </source>
</reference>
<name>FB107_ARATH</name>
<sequence>MADWSLLPNDLLELIVGHLETSFEIVLFRSVCSSWRSVVPPQDQSRCLSIKTHDISFNAGFSFSGQPTDHPLFGSTLTKIPIYLVKFWTPFGDDYLLAEMREREGGEPMFLLSPLSSNRIIYGMGINKVLFNSLTSPIIPFGQYYEITYSEKQPIRYRYGLPCHLWDKLEWVEITERVEFLKLDSEDSRDFAVLFAGRMCNLVMYRSRNMSWTQVVEHPEKYAYQDLVAFKGKFYALDSSGRGRVFVVELSLEVMEIPSVRGSQQSSKENLVLSGEELLLVQRFTPEVRHYDEYLYTWFRVFRLDEEEGRESGFKLMTLTTE</sequence>
<evidence type="ECO:0000305" key="1"/>
<protein>
    <recommendedName>
        <fullName>F-box protein At2g16300</fullName>
    </recommendedName>
</protein>
<feature type="chain" id="PRO_0000283380" description="F-box protein At2g16300">
    <location>
        <begin position="1"/>
        <end position="322"/>
    </location>
</feature>
<feature type="domain" description="F-box">
    <location>
        <begin position="2"/>
        <end position="50"/>
    </location>
</feature>
<organism>
    <name type="scientific">Arabidopsis thaliana</name>
    <name type="common">Mouse-ear cress</name>
    <dbReference type="NCBI Taxonomy" id="3702"/>
    <lineage>
        <taxon>Eukaryota</taxon>
        <taxon>Viridiplantae</taxon>
        <taxon>Streptophyta</taxon>
        <taxon>Embryophyta</taxon>
        <taxon>Tracheophyta</taxon>
        <taxon>Spermatophyta</taxon>
        <taxon>Magnoliopsida</taxon>
        <taxon>eudicotyledons</taxon>
        <taxon>Gunneridae</taxon>
        <taxon>Pentapetalae</taxon>
        <taxon>rosids</taxon>
        <taxon>malvids</taxon>
        <taxon>Brassicales</taxon>
        <taxon>Brassicaceae</taxon>
        <taxon>Camelineae</taxon>
        <taxon>Arabidopsis</taxon>
    </lineage>
</organism>
<gene>
    <name type="ordered locus">At2g16300</name>
    <name type="ORF">F16F14.20</name>
</gene>
<keyword id="KW-1185">Reference proteome</keyword>